<keyword id="KW-0648">Protein biosynthesis</keyword>
<keyword id="KW-0808">Transferase</keyword>
<comment type="function">
    <text evidence="1">Attaches a formyl group to the free amino group of methionyl-tRNA(fMet). The formyl group appears to play a dual role in the initiator identity of N-formylmethionyl-tRNA by promoting its recognition by IF2 and preventing the misappropriation of this tRNA by the elongation apparatus.</text>
</comment>
<comment type="catalytic activity">
    <reaction evidence="1">
        <text>L-methionyl-tRNA(fMet) + (6R)-10-formyltetrahydrofolate = N-formyl-L-methionyl-tRNA(fMet) + (6S)-5,6,7,8-tetrahydrofolate + H(+)</text>
        <dbReference type="Rhea" id="RHEA:24380"/>
        <dbReference type="Rhea" id="RHEA-COMP:9952"/>
        <dbReference type="Rhea" id="RHEA-COMP:9953"/>
        <dbReference type="ChEBI" id="CHEBI:15378"/>
        <dbReference type="ChEBI" id="CHEBI:57453"/>
        <dbReference type="ChEBI" id="CHEBI:78530"/>
        <dbReference type="ChEBI" id="CHEBI:78844"/>
        <dbReference type="ChEBI" id="CHEBI:195366"/>
        <dbReference type="EC" id="2.1.2.9"/>
    </reaction>
</comment>
<comment type="similarity">
    <text evidence="1">Belongs to the Fmt family.</text>
</comment>
<feature type="chain" id="PRO_1000098401" description="Methionyl-tRNA formyltransferase">
    <location>
        <begin position="1"/>
        <end position="315"/>
    </location>
</feature>
<feature type="binding site" evidence="1">
    <location>
        <begin position="113"/>
        <end position="116"/>
    </location>
    <ligand>
        <name>(6S)-5,6,7,8-tetrahydrofolate</name>
        <dbReference type="ChEBI" id="CHEBI:57453"/>
    </ligand>
</feature>
<dbReference type="EC" id="2.1.2.9" evidence="1"/>
<dbReference type="EMBL" id="CP000948">
    <property type="protein sequence ID" value="ACB04350.1"/>
    <property type="molecule type" value="Genomic_DNA"/>
</dbReference>
<dbReference type="RefSeq" id="WP_000004473.1">
    <property type="nucleotide sequence ID" value="NC_010473.1"/>
</dbReference>
<dbReference type="SMR" id="B1X6E0"/>
<dbReference type="KEGG" id="ecd:ECDH10B_3462"/>
<dbReference type="HOGENOM" id="CLU_033347_1_2_6"/>
<dbReference type="GO" id="GO:0005829">
    <property type="term" value="C:cytosol"/>
    <property type="evidence" value="ECO:0007669"/>
    <property type="project" value="TreeGrafter"/>
</dbReference>
<dbReference type="GO" id="GO:0004479">
    <property type="term" value="F:methionyl-tRNA formyltransferase activity"/>
    <property type="evidence" value="ECO:0007669"/>
    <property type="project" value="UniProtKB-UniRule"/>
</dbReference>
<dbReference type="CDD" id="cd08646">
    <property type="entry name" value="FMT_core_Met-tRNA-FMT_N"/>
    <property type="match status" value="1"/>
</dbReference>
<dbReference type="CDD" id="cd08704">
    <property type="entry name" value="Met_tRNA_FMT_C"/>
    <property type="match status" value="1"/>
</dbReference>
<dbReference type="FunFam" id="3.10.25.10:FF:000001">
    <property type="entry name" value="Methionyl-tRNA formyltransferase"/>
    <property type="match status" value="1"/>
</dbReference>
<dbReference type="FunFam" id="3.40.50.12230:FF:000001">
    <property type="entry name" value="Methionyl-tRNA formyltransferase"/>
    <property type="match status" value="1"/>
</dbReference>
<dbReference type="FunFam" id="3.40.50.170:FF:000003">
    <property type="entry name" value="Methionyl-tRNA formyltransferase"/>
    <property type="match status" value="1"/>
</dbReference>
<dbReference type="Gene3D" id="3.10.25.10">
    <property type="entry name" value="Formyl transferase, C-terminal domain"/>
    <property type="match status" value="1"/>
</dbReference>
<dbReference type="Gene3D" id="3.40.50.170">
    <property type="entry name" value="Formyl transferase, N-terminal domain"/>
    <property type="match status" value="1"/>
</dbReference>
<dbReference type="HAMAP" id="MF_00182">
    <property type="entry name" value="Formyl_trans"/>
    <property type="match status" value="1"/>
</dbReference>
<dbReference type="InterPro" id="IPR005794">
    <property type="entry name" value="Fmt"/>
</dbReference>
<dbReference type="InterPro" id="IPR005793">
    <property type="entry name" value="Formyl_trans_C"/>
</dbReference>
<dbReference type="InterPro" id="IPR037022">
    <property type="entry name" value="Formyl_trans_C_sf"/>
</dbReference>
<dbReference type="InterPro" id="IPR002376">
    <property type="entry name" value="Formyl_transf_N"/>
</dbReference>
<dbReference type="InterPro" id="IPR036477">
    <property type="entry name" value="Formyl_transf_N_sf"/>
</dbReference>
<dbReference type="InterPro" id="IPR011034">
    <property type="entry name" value="Formyl_transferase-like_C_sf"/>
</dbReference>
<dbReference type="InterPro" id="IPR001555">
    <property type="entry name" value="GART_AS"/>
</dbReference>
<dbReference type="InterPro" id="IPR044135">
    <property type="entry name" value="Met-tRNA-FMT_C"/>
</dbReference>
<dbReference type="InterPro" id="IPR041711">
    <property type="entry name" value="Met-tRNA-FMT_N"/>
</dbReference>
<dbReference type="NCBIfam" id="TIGR00460">
    <property type="entry name" value="fmt"/>
    <property type="match status" value="1"/>
</dbReference>
<dbReference type="PANTHER" id="PTHR11138">
    <property type="entry name" value="METHIONYL-TRNA FORMYLTRANSFERASE"/>
    <property type="match status" value="1"/>
</dbReference>
<dbReference type="PANTHER" id="PTHR11138:SF5">
    <property type="entry name" value="METHIONYL-TRNA FORMYLTRANSFERASE, MITOCHONDRIAL"/>
    <property type="match status" value="1"/>
</dbReference>
<dbReference type="Pfam" id="PF02911">
    <property type="entry name" value="Formyl_trans_C"/>
    <property type="match status" value="1"/>
</dbReference>
<dbReference type="Pfam" id="PF00551">
    <property type="entry name" value="Formyl_trans_N"/>
    <property type="match status" value="1"/>
</dbReference>
<dbReference type="SUPFAM" id="SSF50486">
    <property type="entry name" value="FMT C-terminal domain-like"/>
    <property type="match status" value="1"/>
</dbReference>
<dbReference type="SUPFAM" id="SSF53328">
    <property type="entry name" value="Formyltransferase"/>
    <property type="match status" value="1"/>
</dbReference>
<dbReference type="PROSITE" id="PS00373">
    <property type="entry name" value="GART"/>
    <property type="match status" value="1"/>
</dbReference>
<proteinExistence type="inferred from homology"/>
<evidence type="ECO:0000255" key="1">
    <source>
        <dbReference type="HAMAP-Rule" id="MF_00182"/>
    </source>
</evidence>
<protein>
    <recommendedName>
        <fullName evidence="1">Methionyl-tRNA formyltransferase</fullName>
        <ecNumber evidence="1">2.1.2.9</ecNumber>
    </recommendedName>
</protein>
<organism>
    <name type="scientific">Escherichia coli (strain K12 / DH10B)</name>
    <dbReference type="NCBI Taxonomy" id="316385"/>
    <lineage>
        <taxon>Bacteria</taxon>
        <taxon>Pseudomonadati</taxon>
        <taxon>Pseudomonadota</taxon>
        <taxon>Gammaproteobacteria</taxon>
        <taxon>Enterobacterales</taxon>
        <taxon>Enterobacteriaceae</taxon>
        <taxon>Escherichia</taxon>
    </lineage>
</organism>
<accession>B1X6E0</accession>
<gene>
    <name evidence="1" type="primary">fmt</name>
    <name type="ordered locus">ECDH10B_3462</name>
</gene>
<name>FMT_ECODH</name>
<reference key="1">
    <citation type="journal article" date="2008" name="J. Bacteriol.">
        <title>The complete genome sequence of Escherichia coli DH10B: insights into the biology of a laboratory workhorse.</title>
        <authorList>
            <person name="Durfee T."/>
            <person name="Nelson R."/>
            <person name="Baldwin S."/>
            <person name="Plunkett G. III"/>
            <person name="Burland V."/>
            <person name="Mau B."/>
            <person name="Petrosino J.F."/>
            <person name="Qin X."/>
            <person name="Muzny D.M."/>
            <person name="Ayele M."/>
            <person name="Gibbs R.A."/>
            <person name="Csorgo B."/>
            <person name="Posfai G."/>
            <person name="Weinstock G.M."/>
            <person name="Blattner F.R."/>
        </authorList>
    </citation>
    <scope>NUCLEOTIDE SEQUENCE [LARGE SCALE GENOMIC DNA]</scope>
    <source>
        <strain>K12 / DH10B</strain>
    </source>
</reference>
<sequence>MSESLRIIFAGTPDFAARHLDALLSSGHNVVGVFTQPDRPAGRGKKLMPSPVKVLAEEKGLPVFQPVSLRPQENQQLVAELQADVMVVVAYGLILPKAVLEMPRLGCINVHGSLLPRWRGAAPIQRSLWAGDAETGVTIMQMDVGLDTGDMLYKLSCPITAEDTSGTLYDKLAELGPQGLITTLKQLADGTAKPEVQDETLVTYAEKLSKEEARIDWSLSAAQLERCIRAFNPWPMSWLEIEGQPVKVWKASVIDTATNAAPGTILEANKQGIQVATGDGILNLLSLQPAGKKAMSAQDLLNSRREWFVPGNRLV</sequence>